<proteinExistence type="inferred from homology"/>
<evidence type="ECO:0000255" key="1">
    <source>
        <dbReference type="HAMAP-Rule" id="MF_00692"/>
    </source>
</evidence>
<feature type="chain" id="PRO_1000200057" description="Protein nucleotidyltransferase YdiU">
    <location>
        <begin position="1"/>
        <end position="488"/>
    </location>
</feature>
<feature type="active site" description="Proton acceptor" evidence="1">
    <location>
        <position position="253"/>
    </location>
</feature>
<feature type="binding site" evidence="1">
    <location>
        <position position="91"/>
    </location>
    <ligand>
        <name>ATP</name>
        <dbReference type="ChEBI" id="CHEBI:30616"/>
    </ligand>
</feature>
<feature type="binding site" evidence="1">
    <location>
        <position position="93"/>
    </location>
    <ligand>
        <name>ATP</name>
        <dbReference type="ChEBI" id="CHEBI:30616"/>
    </ligand>
</feature>
<feature type="binding site" evidence="1">
    <location>
        <position position="94"/>
    </location>
    <ligand>
        <name>ATP</name>
        <dbReference type="ChEBI" id="CHEBI:30616"/>
    </ligand>
</feature>
<feature type="binding site" evidence="1">
    <location>
        <position position="114"/>
    </location>
    <ligand>
        <name>ATP</name>
        <dbReference type="ChEBI" id="CHEBI:30616"/>
    </ligand>
</feature>
<feature type="binding site" evidence="1">
    <location>
        <position position="126"/>
    </location>
    <ligand>
        <name>ATP</name>
        <dbReference type="ChEBI" id="CHEBI:30616"/>
    </ligand>
</feature>
<feature type="binding site" evidence="1">
    <location>
        <position position="127"/>
    </location>
    <ligand>
        <name>ATP</name>
        <dbReference type="ChEBI" id="CHEBI:30616"/>
    </ligand>
</feature>
<feature type="binding site" evidence="1">
    <location>
        <position position="177"/>
    </location>
    <ligand>
        <name>ATP</name>
        <dbReference type="ChEBI" id="CHEBI:30616"/>
    </ligand>
</feature>
<feature type="binding site" evidence="1">
    <location>
        <position position="184"/>
    </location>
    <ligand>
        <name>ATP</name>
        <dbReference type="ChEBI" id="CHEBI:30616"/>
    </ligand>
</feature>
<feature type="binding site" evidence="1">
    <location>
        <position position="254"/>
    </location>
    <ligand>
        <name>Mg(2+)</name>
        <dbReference type="ChEBI" id="CHEBI:18420"/>
    </ligand>
</feature>
<feature type="binding site" evidence="1">
    <location>
        <position position="263"/>
    </location>
    <ligand>
        <name>ATP</name>
        <dbReference type="ChEBI" id="CHEBI:30616"/>
    </ligand>
</feature>
<feature type="binding site" evidence="1">
    <location>
        <position position="263"/>
    </location>
    <ligand>
        <name>Mg(2+)</name>
        <dbReference type="ChEBI" id="CHEBI:18420"/>
    </ligand>
</feature>
<keyword id="KW-0067">ATP-binding</keyword>
<keyword id="KW-0460">Magnesium</keyword>
<keyword id="KW-0464">Manganese</keyword>
<keyword id="KW-0479">Metal-binding</keyword>
<keyword id="KW-0547">Nucleotide-binding</keyword>
<keyword id="KW-0548">Nucleotidyltransferase</keyword>
<keyword id="KW-0808">Transferase</keyword>
<comment type="function">
    <text evidence="1">Nucleotidyltransferase involved in the post-translational modification of proteins. It can catalyze the addition of adenosine monophosphate (AMP) or uridine monophosphate (UMP) to a protein, resulting in modifications known as AMPylation and UMPylation.</text>
</comment>
<comment type="catalytic activity">
    <reaction evidence="1">
        <text>L-seryl-[protein] + ATP = 3-O-(5'-adenylyl)-L-seryl-[protein] + diphosphate</text>
        <dbReference type="Rhea" id="RHEA:58120"/>
        <dbReference type="Rhea" id="RHEA-COMP:9863"/>
        <dbReference type="Rhea" id="RHEA-COMP:15073"/>
        <dbReference type="ChEBI" id="CHEBI:29999"/>
        <dbReference type="ChEBI" id="CHEBI:30616"/>
        <dbReference type="ChEBI" id="CHEBI:33019"/>
        <dbReference type="ChEBI" id="CHEBI:142516"/>
        <dbReference type="EC" id="2.7.7.108"/>
    </reaction>
</comment>
<comment type="catalytic activity">
    <reaction evidence="1">
        <text>L-threonyl-[protein] + ATP = 3-O-(5'-adenylyl)-L-threonyl-[protein] + diphosphate</text>
        <dbReference type="Rhea" id="RHEA:54292"/>
        <dbReference type="Rhea" id="RHEA-COMP:11060"/>
        <dbReference type="Rhea" id="RHEA-COMP:13847"/>
        <dbReference type="ChEBI" id="CHEBI:30013"/>
        <dbReference type="ChEBI" id="CHEBI:30616"/>
        <dbReference type="ChEBI" id="CHEBI:33019"/>
        <dbReference type="ChEBI" id="CHEBI:138113"/>
        <dbReference type="EC" id="2.7.7.108"/>
    </reaction>
</comment>
<comment type="catalytic activity">
    <reaction evidence="1">
        <text>L-tyrosyl-[protein] + ATP = O-(5'-adenylyl)-L-tyrosyl-[protein] + diphosphate</text>
        <dbReference type="Rhea" id="RHEA:54288"/>
        <dbReference type="Rhea" id="RHEA-COMP:10136"/>
        <dbReference type="Rhea" id="RHEA-COMP:13846"/>
        <dbReference type="ChEBI" id="CHEBI:30616"/>
        <dbReference type="ChEBI" id="CHEBI:33019"/>
        <dbReference type="ChEBI" id="CHEBI:46858"/>
        <dbReference type="ChEBI" id="CHEBI:83624"/>
        <dbReference type="EC" id="2.7.7.108"/>
    </reaction>
</comment>
<comment type="catalytic activity">
    <reaction evidence="1">
        <text>L-histidyl-[protein] + UTP = N(tele)-(5'-uridylyl)-L-histidyl-[protein] + diphosphate</text>
        <dbReference type="Rhea" id="RHEA:83891"/>
        <dbReference type="Rhea" id="RHEA-COMP:9745"/>
        <dbReference type="Rhea" id="RHEA-COMP:20239"/>
        <dbReference type="ChEBI" id="CHEBI:29979"/>
        <dbReference type="ChEBI" id="CHEBI:33019"/>
        <dbReference type="ChEBI" id="CHEBI:46398"/>
        <dbReference type="ChEBI" id="CHEBI:233474"/>
    </reaction>
</comment>
<comment type="catalytic activity">
    <reaction evidence="1">
        <text>L-seryl-[protein] + UTP = O-(5'-uridylyl)-L-seryl-[protein] + diphosphate</text>
        <dbReference type="Rhea" id="RHEA:64604"/>
        <dbReference type="Rhea" id="RHEA-COMP:9863"/>
        <dbReference type="Rhea" id="RHEA-COMP:16635"/>
        <dbReference type="ChEBI" id="CHEBI:29999"/>
        <dbReference type="ChEBI" id="CHEBI:33019"/>
        <dbReference type="ChEBI" id="CHEBI:46398"/>
        <dbReference type="ChEBI" id="CHEBI:156051"/>
    </reaction>
</comment>
<comment type="catalytic activity">
    <reaction evidence="1">
        <text>L-tyrosyl-[protein] + UTP = O-(5'-uridylyl)-L-tyrosyl-[protein] + diphosphate</text>
        <dbReference type="Rhea" id="RHEA:83887"/>
        <dbReference type="Rhea" id="RHEA-COMP:10136"/>
        <dbReference type="Rhea" id="RHEA-COMP:20238"/>
        <dbReference type="ChEBI" id="CHEBI:33019"/>
        <dbReference type="ChEBI" id="CHEBI:46398"/>
        <dbReference type="ChEBI" id="CHEBI:46858"/>
        <dbReference type="ChEBI" id="CHEBI:90602"/>
    </reaction>
</comment>
<comment type="cofactor">
    <cofactor evidence="1">
        <name>Mg(2+)</name>
        <dbReference type="ChEBI" id="CHEBI:18420"/>
    </cofactor>
    <cofactor evidence="1">
        <name>Mn(2+)</name>
        <dbReference type="ChEBI" id="CHEBI:29035"/>
    </cofactor>
</comment>
<comment type="similarity">
    <text evidence="1">Belongs to the SELO family.</text>
</comment>
<gene>
    <name evidence="1" type="primary">ydiU</name>
    <name evidence="1" type="synonym">selO</name>
    <name type="ordered locus">BCQ_3304</name>
</gene>
<reference key="1">
    <citation type="journal article" date="2009" name="J. Bacteriol.">
        <title>Complete genome sequence of the extremophilic Bacillus cereus strain Q1 with industrial applications.</title>
        <authorList>
            <person name="Xiong Z."/>
            <person name="Jiang Y."/>
            <person name="Qi D."/>
            <person name="Lu H."/>
            <person name="Yang F."/>
            <person name="Yang J."/>
            <person name="Chen L."/>
            <person name="Sun L."/>
            <person name="Xu X."/>
            <person name="Xue Y."/>
            <person name="Zhu Y."/>
            <person name="Jin Q."/>
        </authorList>
    </citation>
    <scope>NUCLEOTIDE SEQUENCE [LARGE SCALE GENOMIC DNA]</scope>
    <source>
        <strain>Q1</strain>
    </source>
</reference>
<dbReference type="EC" id="2.7.7.-" evidence="1"/>
<dbReference type="EC" id="2.7.7.108" evidence="1"/>
<dbReference type="EMBL" id="CP000227">
    <property type="protein sequence ID" value="ACM13732.1"/>
    <property type="molecule type" value="Genomic_DNA"/>
</dbReference>
<dbReference type="SMR" id="B9ITN8"/>
<dbReference type="KEGG" id="bcq:BCQ_3304"/>
<dbReference type="HOGENOM" id="CLU_010245_4_1_9"/>
<dbReference type="Proteomes" id="UP000000441">
    <property type="component" value="Chromosome"/>
</dbReference>
<dbReference type="GO" id="GO:0070733">
    <property type="term" value="F:AMPylase activity"/>
    <property type="evidence" value="ECO:0007669"/>
    <property type="project" value="TreeGrafter"/>
</dbReference>
<dbReference type="GO" id="GO:0005524">
    <property type="term" value="F:ATP binding"/>
    <property type="evidence" value="ECO:0007669"/>
    <property type="project" value="UniProtKB-UniRule"/>
</dbReference>
<dbReference type="GO" id="GO:0000287">
    <property type="term" value="F:magnesium ion binding"/>
    <property type="evidence" value="ECO:0007669"/>
    <property type="project" value="UniProtKB-UniRule"/>
</dbReference>
<dbReference type="HAMAP" id="MF_00692">
    <property type="entry name" value="YdiU_SelO"/>
    <property type="match status" value="1"/>
</dbReference>
<dbReference type="InterPro" id="IPR003846">
    <property type="entry name" value="SelO"/>
</dbReference>
<dbReference type="NCBIfam" id="NF000658">
    <property type="entry name" value="PRK00029.1"/>
    <property type="match status" value="1"/>
</dbReference>
<dbReference type="PANTHER" id="PTHR32057">
    <property type="entry name" value="PROTEIN ADENYLYLTRANSFERASE SELO, MITOCHONDRIAL"/>
    <property type="match status" value="1"/>
</dbReference>
<dbReference type="PANTHER" id="PTHR32057:SF14">
    <property type="entry name" value="PROTEIN ADENYLYLTRANSFERASE SELO, MITOCHONDRIAL"/>
    <property type="match status" value="1"/>
</dbReference>
<dbReference type="Pfam" id="PF02696">
    <property type="entry name" value="SelO"/>
    <property type="match status" value="1"/>
</dbReference>
<accession>B9ITN8</accession>
<organism>
    <name type="scientific">Bacillus cereus (strain Q1)</name>
    <dbReference type="NCBI Taxonomy" id="361100"/>
    <lineage>
        <taxon>Bacteria</taxon>
        <taxon>Bacillati</taxon>
        <taxon>Bacillota</taxon>
        <taxon>Bacilli</taxon>
        <taxon>Bacillales</taxon>
        <taxon>Bacillaceae</taxon>
        <taxon>Bacillus</taxon>
        <taxon>Bacillus cereus group</taxon>
    </lineage>
</organism>
<sequence>MTKNNEAGWNLDHSYTTLPQSFYTEIPPTPVSSPELVKLNHSLAISLGFNPEELKKEAEIAIFAGNALPEGAHPLAQAYAGHQFGHFNMLGDGRALLIGEQMTPAGKRFDIQLKGSGPTPYSRRGDGRAALGPMLREYIISEAMYALDIPTTRSLAVVTTGEPTYRETKLPGAILTRVASSHIRVGTFQYAAARGSIEDLQSLADYTIKRHYPEIEDHENRYTALLQEVIKRQASLIAKWQLVGFIHGVMNTDNITISGETIDYGPCAFMDNYDQGTVFSSIDTQGRYAYGNQPYMAAWDLARLAESLIPILHEDEEEALKIAQDEISKFSVQYENQWFLGMKKKLGLFSNEEQDQSLIEQLLKMMEKFKADYTNTFRSLTLNTLENTPLFDSPEFKEWYKLWQSRLEKQDESKENAYEMMKNNNPSIIPRNHRVEEALEAAVTSGDYSVMEKLLEALANPYAYTTDQEEYCVPPAPTNRPYRTFCGT</sequence>
<protein>
    <recommendedName>
        <fullName evidence="1">Protein nucleotidyltransferase YdiU</fullName>
        <ecNumber evidence="1">2.7.7.-</ecNumber>
    </recommendedName>
    <alternativeName>
        <fullName evidence="1">Protein adenylyltransferase YdiU</fullName>
        <ecNumber evidence="1">2.7.7.108</ecNumber>
    </alternativeName>
    <alternativeName>
        <fullName evidence="1">Protein uridylyltransferase YdiU</fullName>
        <ecNumber evidence="1">2.7.7.-</ecNumber>
    </alternativeName>
</protein>
<name>SELO_BACCQ</name>